<organism>
    <name type="scientific">Homo sapiens</name>
    <name type="common">Human</name>
    <dbReference type="NCBI Taxonomy" id="9606"/>
    <lineage>
        <taxon>Eukaryota</taxon>
        <taxon>Metazoa</taxon>
        <taxon>Chordata</taxon>
        <taxon>Craniata</taxon>
        <taxon>Vertebrata</taxon>
        <taxon>Euteleostomi</taxon>
        <taxon>Mammalia</taxon>
        <taxon>Eutheria</taxon>
        <taxon>Euarchontoglires</taxon>
        <taxon>Primates</taxon>
        <taxon>Haplorrhini</taxon>
        <taxon>Catarrhini</taxon>
        <taxon>Hominidae</taxon>
        <taxon>Homo</taxon>
    </lineage>
</organism>
<reference key="1">
    <citation type="journal article" date="1998" name="DNA Res.">
        <title>Prediction of the coding sequences of unidentified human genes. XI. The complete sequences of 100 new cDNA clones from brain which code for large proteins in vitro.</title>
        <authorList>
            <person name="Nagase T."/>
            <person name="Ishikawa K."/>
            <person name="Suyama M."/>
            <person name="Kikuno R."/>
            <person name="Miyajima N."/>
            <person name="Tanaka A."/>
            <person name="Kotani H."/>
            <person name="Nomura N."/>
            <person name="Ohara O."/>
        </authorList>
    </citation>
    <scope>NUCLEOTIDE SEQUENCE [LARGE SCALE MRNA] (ISOFORM 1)</scope>
    <source>
        <tissue>Brain</tissue>
    </source>
</reference>
<reference key="2">
    <citation type="journal article" date="2004" name="Genome Biol.">
        <title>A genome annotation-driven approach to cloning the human ORFeome.</title>
        <authorList>
            <person name="Collins J.E."/>
            <person name="Wright C.L."/>
            <person name="Edwards C.A."/>
            <person name="Davis M.P."/>
            <person name="Grinham J.A."/>
            <person name="Cole C.G."/>
            <person name="Goward M.E."/>
            <person name="Aguado B."/>
            <person name="Mallya M."/>
            <person name="Mokrab Y."/>
            <person name="Huckle E.J."/>
            <person name="Beare D.M."/>
            <person name="Dunham I."/>
        </authorList>
    </citation>
    <scope>NUCLEOTIDE SEQUENCE [LARGE SCALE MRNA] (ISOFORM 1)</scope>
</reference>
<reference key="3">
    <citation type="journal article" date="1999" name="Nature">
        <title>The DNA sequence of human chromosome 22.</title>
        <authorList>
            <person name="Dunham I."/>
            <person name="Hunt A.R."/>
            <person name="Collins J.E."/>
            <person name="Bruskiewich R."/>
            <person name="Beare D.M."/>
            <person name="Clamp M."/>
            <person name="Smink L.J."/>
            <person name="Ainscough R."/>
            <person name="Almeida J.P."/>
            <person name="Babbage A.K."/>
            <person name="Bagguley C."/>
            <person name="Bailey J."/>
            <person name="Barlow K.F."/>
            <person name="Bates K.N."/>
            <person name="Beasley O.P."/>
            <person name="Bird C.P."/>
            <person name="Blakey S.E."/>
            <person name="Bridgeman A.M."/>
            <person name="Buck D."/>
            <person name="Burgess J."/>
            <person name="Burrill W.D."/>
            <person name="Burton J."/>
            <person name="Carder C."/>
            <person name="Carter N.P."/>
            <person name="Chen Y."/>
            <person name="Clark G."/>
            <person name="Clegg S.M."/>
            <person name="Cobley V.E."/>
            <person name="Cole C.G."/>
            <person name="Collier R.E."/>
            <person name="Connor R."/>
            <person name="Conroy D."/>
            <person name="Corby N.R."/>
            <person name="Coville G.J."/>
            <person name="Cox A.V."/>
            <person name="Davis J."/>
            <person name="Dawson E."/>
            <person name="Dhami P.D."/>
            <person name="Dockree C."/>
            <person name="Dodsworth S.J."/>
            <person name="Durbin R.M."/>
            <person name="Ellington A.G."/>
            <person name="Evans K.L."/>
            <person name="Fey J.M."/>
            <person name="Fleming K."/>
            <person name="French L."/>
            <person name="Garner A.A."/>
            <person name="Gilbert J.G.R."/>
            <person name="Goward M.E."/>
            <person name="Grafham D.V."/>
            <person name="Griffiths M.N.D."/>
            <person name="Hall C."/>
            <person name="Hall R.E."/>
            <person name="Hall-Tamlyn G."/>
            <person name="Heathcott R.W."/>
            <person name="Ho S."/>
            <person name="Holmes S."/>
            <person name="Hunt S.E."/>
            <person name="Jones M.C."/>
            <person name="Kershaw J."/>
            <person name="Kimberley A.M."/>
            <person name="King A."/>
            <person name="Laird G.K."/>
            <person name="Langford C.F."/>
            <person name="Leversha M.A."/>
            <person name="Lloyd C."/>
            <person name="Lloyd D.M."/>
            <person name="Martyn I.D."/>
            <person name="Mashreghi-Mohammadi M."/>
            <person name="Matthews L.H."/>
            <person name="Mccann O.T."/>
            <person name="Mcclay J."/>
            <person name="Mclaren S."/>
            <person name="McMurray A.A."/>
            <person name="Milne S.A."/>
            <person name="Mortimore B.J."/>
            <person name="Odell C.N."/>
            <person name="Pavitt R."/>
            <person name="Pearce A.V."/>
            <person name="Pearson D."/>
            <person name="Phillimore B.J.C.T."/>
            <person name="Phillips S.H."/>
            <person name="Plumb R.W."/>
            <person name="Ramsay H."/>
            <person name="Ramsey Y."/>
            <person name="Rogers L."/>
            <person name="Ross M.T."/>
            <person name="Scott C.E."/>
            <person name="Sehra H.K."/>
            <person name="Skuce C.D."/>
            <person name="Smalley S."/>
            <person name="Smith M.L."/>
            <person name="Soderlund C."/>
            <person name="Spragon L."/>
            <person name="Steward C.A."/>
            <person name="Sulston J.E."/>
            <person name="Swann R.M."/>
            <person name="Vaudin M."/>
            <person name="Wall M."/>
            <person name="Wallis J.M."/>
            <person name="Whiteley M.N."/>
            <person name="Willey D.L."/>
            <person name="Williams L."/>
            <person name="Williams S.A."/>
            <person name="Williamson H."/>
            <person name="Wilmer T.E."/>
            <person name="Wilming L."/>
            <person name="Wright C.L."/>
            <person name="Hubbard T."/>
            <person name="Bentley D.R."/>
            <person name="Beck S."/>
            <person name="Rogers J."/>
            <person name="Shimizu N."/>
            <person name="Minoshima S."/>
            <person name="Kawasaki K."/>
            <person name="Sasaki T."/>
            <person name="Asakawa S."/>
            <person name="Kudoh J."/>
            <person name="Shintani A."/>
            <person name="Shibuya K."/>
            <person name="Yoshizaki Y."/>
            <person name="Aoki N."/>
            <person name="Mitsuyama S."/>
            <person name="Roe B.A."/>
            <person name="Chen F."/>
            <person name="Chu L."/>
            <person name="Crabtree J."/>
            <person name="Deschamps S."/>
            <person name="Do A."/>
            <person name="Do T."/>
            <person name="Dorman A."/>
            <person name="Fang F."/>
            <person name="Fu Y."/>
            <person name="Hu P."/>
            <person name="Hua A."/>
            <person name="Kenton S."/>
            <person name="Lai H."/>
            <person name="Lao H.I."/>
            <person name="Lewis J."/>
            <person name="Lewis S."/>
            <person name="Lin S.-P."/>
            <person name="Loh P."/>
            <person name="Malaj E."/>
            <person name="Nguyen T."/>
            <person name="Pan H."/>
            <person name="Phan S."/>
            <person name="Qi S."/>
            <person name="Qian Y."/>
            <person name="Ray L."/>
            <person name="Ren Q."/>
            <person name="Shaull S."/>
            <person name="Sloan D."/>
            <person name="Song L."/>
            <person name="Wang Q."/>
            <person name="Wang Y."/>
            <person name="Wang Z."/>
            <person name="White J."/>
            <person name="Willingham D."/>
            <person name="Wu H."/>
            <person name="Yao Z."/>
            <person name="Zhan M."/>
            <person name="Zhang G."/>
            <person name="Chissoe S."/>
            <person name="Murray J."/>
            <person name="Miller N."/>
            <person name="Minx P."/>
            <person name="Fulton R."/>
            <person name="Johnson D."/>
            <person name="Bemis G."/>
            <person name="Bentley D."/>
            <person name="Bradshaw H."/>
            <person name="Bourne S."/>
            <person name="Cordes M."/>
            <person name="Du Z."/>
            <person name="Fulton L."/>
            <person name="Goela D."/>
            <person name="Graves T."/>
            <person name="Hawkins J."/>
            <person name="Hinds K."/>
            <person name="Kemp K."/>
            <person name="Latreille P."/>
            <person name="Layman D."/>
            <person name="Ozersky P."/>
            <person name="Rohlfing T."/>
            <person name="Scheet P."/>
            <person name="Walker C."/>
            <person name="Wamsley A."/>
            <person name="Wohldmann P."/>
            <person name="Pepin K."/>
            <person name="Nelson J."/>
            <person name="Korf I."/>
            <person name="Bedell J.A."/>
            <person name="Hillier L.W."/>
            <person name="Mardis E."/>
            <person name="Waterston R."/>
            <person name="Wilson R."/>
            <person name="Emanuel B.S."/>
            <person name="Shaikh T."/>
            <person name="Kurahashi H."/>
            <person name="Saitta S."/>
            <person name="Budarf M.L."/>
            <person name="McDermid H.E."/>
            <person name="Johnson A."/>
            <person name="Wong A.C.C."/>
            <person name="Morrow B.E."/>
            <person name="Edelmann L."/>
            <person name="Kim U.J."/>
            <person name="Shizuya H."/>
            <person name="Simon M.I."/>
            <person name="Dumanski J.P."/>
            <person name="Peyrard M."/>
            <person name="Kedra D."/>
            <person name="Seroussi E."/>
            <person name="Fransson I."/>
            <person name="Tapia I."/>
            <person name="Bruder C.E."/>
            <person name="O'Brien K.P."/>
            <person name="Wilkinson P."/>
            <person name="Bodenteich A."/>
            <person name="Hartman K."/>
            <person name="Hu X."/>
            <person name="Khan A.S."/>
            <person name="Lane L."/>
            <person name="Tilahun Y."/>
            <person name="Wright H."/>
        </authorList>
    </citation>
    <scope>NUCLEOTIDE SEQUENCE [LARGE SCALE GENOMIC DNA]</scope>
</reference>
<reference key="4">
    <citation type="submission" date="2005-07" db="EMBL/GenBank/DDBJ databases">
        <authorList>
            <person name="Mural R.J."/>
            <person name="Istrail S."/>
            <person name="Sutton G.G."/>
            <person name="Florea L."/>
            <person name="Halpern A.L."/>
            <person name="Mobarry C.M."/>
            <person name="Lippert R."/>
            <person name="Walenz B."/>
            <person name="Shatkay H."/>
            <person name="Dew I."/>
            <person name="Miller J.R."/>
            <person name="Flanigan M.J."/>
            <person name="Edwards N.J."/>
            <person name="Bolanos R."/>
            <person name="Fasulo D."/>
            <person name="Halldorsson B.V."/>
            <person name="Hannenhalli S."/>
            <person name="Turner R."/>
            <person name="Yooseph S."/>
            <person name="Lu F."/>
            <person name="Nusskern D.R."/>
            <person name="Shue B.C."/>
            <person name="Zheng X.H."/>
            <person name="Zhong F."/>
            <person name="Delcher A.L."/>
            <person name="Huson D.H."/>
            <person name="Kravitz S.A."/>
            <person name="Mouchard L."/>
            <person name="Reinert K."/>
            <person name="Remington K.A."/>
            <person name="Clark A.G."/>
            <person name="Waterman M.S."/>
            <person name="Eichler E.E."/>
            <person name="Adams M.D."/>
            <person name="Hunkapiller M.W."/>
            <person name="Myers E.W."/>
            <person name="Venter J.C."/>
        </authorList>
    </citation>
    <scope>NUCLEOTIDE SEQUENCE [LARGE SCALE GENOMIC DNA]</scope>
</reference>
<reference key="5">
    <citation type="journal article" date="2004" name="Genome Res.">
        <title>The status, quality, and expansion of the NIH full-length cDNA project: the Mammalian Gene Collection (MGC).</title>
        <authorList>
            <consortium name="The MGC Project Team"/>
        </authorList>
    </citation>
    <scope>NUCLEOTIDE SEQUENCE [LARGE SCALE MRNA] (ISOFORMS 1 AND 2)</scope>
    <source>
        <tissue>Embryonic carcinoma</tissue>
    </source>
</reference>
<reference key="6">
    <citation type="journal article" date="2002" name="Nucleic Acids Res.">
        <title>Gene expression changes in response to E2F1 activation.</title>
        <authorList>
            <person name="Stanelle J."/>
            <person name="Stiewe T."/>
            <person name="Theseling C.C."/>
            <person name="Peter M."/>
            <person name="Puetzer B.M."/>
        </authorList>
    </citation>
    <scope>INDUCTION</scope>
</reference>
<reference key="7">
    <citation type="journal article" date="2005" name="Cell Death Differ.">
        <title>A novel mitochondrial protein DIP mediates E2F1-induced apoptosis independently of p53.</title>
        <authorList>
            <person name="Stanelle J."/>
            <person name="Tu-Rapp H."/>
            <person name="Puetzer B.M."/>
        </authorList>
    </citation>
    <scope>FUNCTION</scope>
    <scope>SUBCELLULAR LOCATION</scope>
    <scope>INDUCTION</scope>
</reference>
<reference key="8">
    <citation type="journal article" date="2008" name="Life Sci.">
        <title>Molecular profiling of genes in squamous cell lung carcinoma in Asian Indians.</title>
        <authorList>
            <person name="Sen S."/>
            <person name="Ateeq B."/>
            <person name="Sharma H."/>
            <person name="Datta P."/>
            <person name="Gupta S.D."/>
            <person name="Bal S."/>
            <person name="Kumar A."/>
            <person name="Singh N."/>
        </authorList>
    </citation>
    <scope>TISSUE SPECIFICITY</scope>
</reference>
<reference key="9">
    <citation type="journal article" date="2008" name="Proc. Natl. Acad. Sci. U.S.A.">
        <title>A quantitative atlas of mitotic phosphorylation.</title>
        <authorList>
            <person name="Dephoure N."/>
            <person name="Zhou C."/>
            <person name="Villen J."/>
            <person name="Beausoleil S.A."/>
            <person name="Bakalarski C.E."/>
            <person name="Elledge S.J."/>
            <person name="Gygi S.P."/>
        </authorList>
    </citation>
    <scope>PHOSPHORYLATION [LARGE SCALE ANALYSIS] AT SER-24 AND SER-28</scope>
    <scope>IDENTIFICATION BY MASS SPECTROMETRY [LARGE SCALE ANALYSIS]</scope>
    <source>
        <tissue>Cervix carcinoma</tissue>
    </source>
</reference>
<reference key="10">
    <citation type="journal article" date="2005" name="BMC Psychiatry">
        <title>Systematic mutation analysis of KIAA0767 and KIAA1646 in chromosome 22q-linked periodic catatonia.</title>
        <authorList>
            <person name="Stoeber G."/>
            <person name="Kohlmann B."/>
            <person name="Iekiera M."/>
            <person name="Rubie C."/>
            <person name="Gawlik M."/>
            <person name="Moeller-Ehrlich K."/>
            <person name="Meitinger T."/>
            <person name="Bettecken T."/>
        </authorList>
    </citation>
    <scope>VARIANT ILE-159</scope>
</reference>
<feature type="chain" id="PRO_0000328742" description="GRAM domain-containing protein 4">
    <location>
        <begin position="1"/>
        <end position="578"/>
    </location>
</feature>
<feature type="transmembrane region" description="Helical" evidence="2">
    <location>
        <begin position="240"/>
        <end position="260"/>
    </location>
</feature>
<feature type="transmembrane region" description="Helical" evidence="2">
    <location>
        <begin position="334"/>
        <end position="354"/>
    </location>
</feature>
<feature type="transmembrane region" description="Helical" evidence="2">
    <location>
        <begin position="356"/>
        <end position="376"/>
    </location>
</feature>
<feature type="domain" description="GRAM">
    <location>
        <begin position="445"/>
        <end position="523"/>
    </location>
</feature>
<feature type="region of interest" description="Disordered" evidence="3">
    <location>
        <begin position="23"/>
        <end position="58"/>
    </location>
</feature>
<feature type="region of interest" description="Disordered" evidence="3">
    <location>
        <begin position="136"/>
        <end position="159"/>
    </location>
</feature>
<feature type="region of interest" description="Disordered" evidence="3">
    <location>
        <begin position="415"/>
        <end position="435"/>
    </location>
</feature>
<feature type="coiled-coil region" evidence="2">
    <location>
        <begin position="83"/>
        <end position="143"/>
    </location>
</feature>
<feature type="compositionally biased region" description="Basic and acidic residues" evidence="3">
    <location>
        <begin position="44"/>
        <end position="53"/>
    </location>
</feature>
<feature type="modified residue" description="Phosphoserine" evidence="11">
    <location>
        <position position="24"/>
    </location>
</feature>
<feature type="modified residue" description="Phosphoserine" evidence="11">
    <location>
        <position position="28"/>
    </location>
</feature>
<feature type="splice variant" id="VSP_032771" description="In isoform 2." evidence="8">
    <location>
        <begin position="1"/>
        <end position="477"/>
    </location>
</feature>
<feature type="sequence variant" id="VAR_042505" description="In dbSNP:rs36211078." evidence="6">
    <original>S</original>
    <variation>I</variation>
    <location>
        <position position="159"/>
    </location>
</feature>
<name>GRAM4_HUMAN</name>
<keyword id="KW-0025">Alternative splicing</keyword>
<keyword id="KW-0053">Apoptosis</keyword>
<keyword id="KW-0175">Coiled coil</keyword>
<keyword id="KW-0256">Endoplasmic reticulum</keyword>
<keyword id="KW-0472">Membrane</keyword>
<keyword id="KW-0496">Mitochondrion</keyword>
<keyword id="KW-0597">Phosphoprotein</keyword>
<keyword id="KW-1267">Proteomics identification</keyword>
<keyword id="KW-1185">Reference proteome</keyword>
<keyword id="KW-0812">Transmembrane</keyword>
<keyword id="KW-1133">Transmembrane helix</keyword>
<evidence type="ECO:0000250" key="1">
    <source>
        <dbReference type="UniProtKB" id="Q8CB44"/>
    </source>
</evidence>
<evidence type="ECO:0000255" key="2"/>
<evidence type="ECO:0000256" key="3">
    <source>
        <dbReference type="SAM" id="MobiDB-lite"/>
    </source>
</evidence>
<evidence type="ECO:0000269" key="4">
    <source>
    </source>
</evidence>
<evidence type="ECO:0000269" key="5">
    <source>
    </source>
</evidence>
<evidence type="ECO:0000269" key="6">
    <source>
    </source>
</evidence>
<evidence type="ECO:0000269" key="7">
    <source>
    </source>
</evidence>
<evidence type="ECO:0000303" key="8">
    <source>
    </source>
</evidence>
<evidence type="ECO:0000305" key="9"/>
<evidence type="ECO:0000312" key="10">
    <source>
        <dbReference type="HGNC" id="HGNC:29113"/>
    </source>
</evidence>
<evidence type="ECO:0007744" key="11">
    <source>
    </source>
</evidence>
<proteinExistence type="evidence at protein level"/>
<gene>
    <name evidence="10" type="primary">GRAMD4</name>
    <name type="synonym">DIP</name>
    <name type="synonym">KIAA0767</name>
</gene>
<protein>
    <recommendedName>
        <fullName evidence="9">GRAM domain-containing protein 4</fullName>
    </recommendedName>
    <alternativeName>
        <fullName>Death-inducing protein</fullName>
    </alternativeName>
</protein>
<sequence length="578" mass="66408">MLRRLDKIRFRGHKRDDFLDLAESPNASDTECSDEIPLKVPRTSPRDSEELRDPAGPGTLIMATGVQDFNRTEFDRLNEIKGHLEIALLEKHFLQEELRKLREETNAEMLRQELDRERQRRMELEQKVQEVLKARTEEQMAQQPPKGQAQASNGAERRSQGLSSRLQKWFYERFGEYVEDFRFQPEENTVETEEPLSARRLTENMRRLKRGAKPVTNFVKNLSALSDWYSVYTSAIAFTVYMNAVWHGWAIPLFLFLAILRLSLNYLIARGWRIQWSIVPEVSEPVEPPKEDLTVSEKFQLVLDVAQKAQNLFGKMADILEKIKNLFMWVQPEITQKLYVALWAAFLASCFFPYRLVGLAVGLYAGIKFFLIDFIFKRCPRLRAKYDTPYIIWRSLPTDPQLKERSSAAVSRRLQTTSSRSYVPSAPAGLGKEEDAGRFHSTKKGNFHEIFNLTENERPLAVCENGWRCCLINRDRKMPTDYIRNGVLYVTENYLCFESSKSGSSKRNKVIKLVDITDIQKYKVLSVLPGSGMGIAVSTPSTQKPLVFGAMVHRDEAFETILSQYIKITSAAASGGDS</sequence>
<dbReference type="EMBL" id="AB018310">
    <property type="protein sequence ID" value="BAA34487.2"/>
    <property type="status" value="ALT_INIT"/>
    <property type="molecule type" value="mRNA"/>
</dbReference>
<dbReference type="EMBL" id="CR456470">
    <property type="protein sequence ID" value="CAG30356.1"/>
    <property type="molecule type" value="mRNA"/>
</dbReference>
<dbReference type="EMBL" id="AL096766">
    <property type="status" value="NOT_ANNOTATED_CDS"/>
    <property type="molecule type" value="Genomic_DNA"/>
</dbReference>
<dbReference type="EMBL" id="AL021392">
    <property type="status" value="NOT_ANNOTATED_CDS"/>
    <property type="molecule type" value="Genomic_DNA"/>
</dbReference>
<dbReference type="EMBL" id="CH471138">
    <property type="protein sequence ID" value="EAW73432.1"/>
    <property type="molecule type" value="Genomic_DNA"/>
</dbReference>
<dbReference type="EMBL" id="BC080189">
    <property type="protein sequence ID" value="AAH80189.1"/>
    <property type="molecule type" value="mRNA"/>
</dbReference>
<dbReference type="EMBL" id="BC129837">
    <property type="protein sequence ID" value="AAI29838.1"/>
    <property type="molecule type" value="mRNA"/>
</dbReference>
<dbReference type="CCDS" id="CCDS33672.1">
    <molecule id="Q6IC98-1"/>
</dbReference>
<dbReference type="RefSeq" id="NP_055939.1">
    <molecule id="Q6IC98-1"/>
    <property type="nucleotide sequence ID" value="NM_015124.5"/>
</dbReference>
<dbReference type="RefSeq" id="XP_006724233.1">
    <molecule id="Q6IC98-1"/>
    <property type="nucleotide sequence ID" value="XM_006724170.5"/>
</dbReference>
<dbReference type="RefSeq" id="XP_016884159.1">
    <molecule id="Q6IC98-1"/>
    <property type="nucleotide sequence ID" value="XM_017028670.3"/>
</dbReference>
<dbReference type="RefSeq" id="XP_047297163.1">
    <molecule id="Q6IC98-1"/>
    <property type="nucleotide sequence ID" value="XM_047441207.1"/>
</dbReference>
<dbReference type="RefSeq" id="XP_047297164.1">
    <molecule id="Q6IC98-1"/>
    <property type="nucleotide sequence ID" value="XM_047441208.1"/>
</dbReference>
<dbReference type="RefSeq" id="XP_047297165.1">
    <molecule id="Q6IC98-1"/>
    <property type="nucleotide sequence ID" value="XM_047441209.1"/>
</dbReference>
<dbReference type="RefSeq" id="XP_047297166.1">
    <molecule id="Q6IC98-1"/>
    <property type="nucleotide sequence ID" value="XM_047441210.1"/>
</dbReference>
<dbReference type="RefSeq" id="XP_047297167.1">
    <molecule id="Q6IC98-1"/>
    <property type="nucleotide sequence ID" value="XM_047441211.1"/>
</dbReference>
<dbReference type="RefSeq" id="XP_054181263.1">
    <molecule id="Q6IC98-1"/>
    <property type="nucleotide sequence ID" value="XM_054325288.1"/>
</dbReference>
<dbReference type="RefSeq" id="XP_054181264.1">
    <molecule id="Q6IC98-1"/>
    <property type="nucleotide sequence ID" value="XM_054325289.1"/>
</dbReference>
<dbReference type="RefSeq" id="XP_054181265.1">
    <molecule id="Q6IC98-1"/>
    <property type="nucleotide sequence ID" value="XM_054325290.1"/>
</dbReference>
<dbReference type="RefSeq" id="XP_054181266.1">
    <molecule id="Q6IC98-1"/>
    <property type="nucleotide sequence ID" value="XM_054325291.1"/>
</dbReference>
<dbReference type="SMR" id="Q6IC98"/>
<dbReference type="BioGRID" id="116766">
    <property type="interactions" value="72"/>
</dbReference>
<dbReference type="FunCoup" id="Q6IC98">
    <property type="interactions" value="595"/>
</dbReference>
<dbReference type="IntAct" id="Q6IC98">
    <property type="interactions" value="17"/>
</dbReference>
<dbReference type="STRING" id="9606.ENSP00000385689"/>
<dbReference type="iPTMnet" id="Q6IC98"/>
<dbReference type="PhosphoSitePlus" id="Q6IC98"/>
<dbReference type="BioMuta" id="GRAMD4"/>
<dbReference type="DMDM" id="74748754"/>
<dbReference type="jPOST" id="Q6IC98"/>
<dbReference type="MassIVE" id="Q6IC98"/>
<dbReference type="PaxDb" id="9606-ENSP00000385689"/>
<dbReference type="PeptideAtlas" id="Q6IC98"/>
<dbReference type="ProteomicsDB" id="66380">
    <molecule id="Q6IC98-1"/>
</dbReference>
<dbReference type="ProteomicsDB" id="66381">
    <molecule id="Q6IC98-2"/>
</dbReference>
<dbReference type="Pumba" id="Q6IC98"/>
<dbReference type="Antibodypedia" id="28118">
    <property type="antibodies" value="49 antibodies from 15 providers"/>
</dbReference>
<dbReference type="DNASU" id="23151"/>
<dbReference type="Ensembl" id="ENST00000361034.7">
    <molecule id="Q6IC98-1"/>
    <property type="protein sequence ID" value="ENSP00000354313.3"/>
    <property type="gene ID" value="ENSG00000075240.17"/>
</dbReference>
<dbReference type="Ensembl" id="ENST00000406902.6">
    <molecule id="Q6IC98-1"/>
    <property type="protein sequence ID" value="ENSP00000385689.1"/>
    <property type="gene ID" value="ENSG00000075240.17"/>
</dbReference>
<dbReference type="Ensembl" id="ENST00000408031.1">
    <molecule id="Q6IC98-2"/>
    <property type="protein sequence ID" value="ENSP00000385851.1"/>
    <property type="gene ID" value="ENSG00000075240.17"/>
</dbReference>
<dbReference type="GeneID" id="23151"/>
<dbReference type="KEGG" id="hsa:23151"/>
<dbReference type="MANE-Select" id="ENST00000406902.6">
    <property type="protein sequence ID" value="ENSP00000385689.1"/>
    <property type="RefSeq nucleotide sequence ID" value="NM_015124.5"/>
    <property type="RefSeq protein sequence ID" value="NP_055939.1"/>
</dbReference>
<dbReference type="UCSC" id="uc003bhx.4">
    <molecule id="Q6IC98-1"/>
    <property type="organism name" value="human"/>
</dbReference>
<dbReference type="AGR" id="HGNC:29113"/>
<dbReference type="CTD" id="23151"/>
<dbReference type="DisGeNET" id="23151"/>
<dbReference type="GeneCards" id="GRAMD4"/>
<dbReference type="HGNC" id="HGNC:29113">
    <property type="gene designation" value="GRAMD4"/>
</dbReference>
<dbReference type="HPA" id="ENSG00000075240">
    <property type="expression patterns" value="Tissue enhanced (liver)"/>
</dbReference>
<dbReference type="MIM" id="613691">
    <property type="type" value="gene"/>
</dbReference>
<dbReference type="neXtProt" id="NX_Q6IC98"/>
<dbReference type="OpenTargets" id="ENSG00000075240"/>
<dbReference type="PharmGKB" id="PA162390212"/>
<dbReference type="VEuPathDB" id="HostDB:ENSG00000075240"/>
<dbReference type="eggNOG" id="ENOG502QPMR">
    <property type="taxonomic scope" value="Eukaryota"/>
</dbReference>
<dbReference type="GeneTree" id="ENSGT00390000010968"/>
<dbReference type="HOGENOM" id="CLU_028241_0_0_1"/>
<dbReference type="InParanoid" id="Q6IC98"/>
<dbReference type="OMA" id="CSACYES"/>
<dbReference type="OrthoDB" id="1708389at2759"/>
<dbReference type="PAN-GO" id="Q6IC98">
    <property type="GO annotations" value="3 GO annotations based on evolutionary models"/>
</dbReference>
<dbReference type="PhylomeDB" id="Q6IC98"/>
<dbReference type="TreeFam" id="TF320445"/>
<dbReference type="PathwayCommons" id="Q6IC98"/>
<dbReference type="SignaLink" id="Q6IC98"/>
<dbReference type="BioGRID-ORCS" id="23151">
    <property type="hits" value="21 hits in 1161 CRISPR screens"/>
</dbReference>
<dbReference type="ChiTaRS" id="GRAMD4">
    <property type="organism name" value="human"/>
</dbReference>
<dbReference type="GenomeRNAi" id="23151"/>
<dbReference type="Pharos" id="Q6IC98">
    <property type="development level" value="Tbio"/>
</dbReference>
<dbReference type="PRO" id="PR:Q6IC98"/>
<dbReference type="Proteomes" id="UP000005640">
    <property type="component" value="Chromosome 22"/>
</dbReference>
<dbReference type="RNAct" id="Q6IC98">
    <property type="molecule type" value="protein"/>
</dbReference>
<dbReference type="Bgee" id="ENSG00000075240">
    <property type="expression patterns" value="Expressed in mucosa of transverse colon and 155 other cell types or tissues"/>
</dbReference>
<dbReference type="ExpressionAtlas" id="Q6IC98">
    <property type="expression patterns" value="baseline and differential"/>
</dbReference>
<dbReference type="GO" id="GO:0005789">
    <property type="term" value="C:endoplasmic reticulum membrane"/>
    <property type="evidence" value="ECO:0007669"/>
    <property type="project" value="UniProtKB-SubCell"/>
</dbReference>
<dbReference type="GO" id="GO:0031966">
    <property type="term" value="C:mitochondrial membrane"/>
    <property type="evidence" value="ECO:0007669"/>
    <property type="project" value="UniProtKB-SubCell"/>
</dbReference>
<dbReference type="GO" id="GO:0005739">
    <property type="term" value="C:mitochondrion"/>
    <property type="evidence" value="ECO:0000314"/>
    <property type="project" value="UniProtKB"/>
</dbReference>
<dbReference type="GO" id="GO:0006915">
    <property type="term" value="P:apoptotic process"/>
    <property type="evidence" value="ECO:0007669"/>
    <property type="project" value="UniProtKB-KW"/>
</dbReference>
<dbReference type="GO" id="GO:0034164">
    <property type="term" value="P:negative regulation of toll-like receptor 9 signaling pathway"/>
    <property type="evidence" value="ECO:0000250"/>
    <property type="project" value="UniProtKB"/>
</dbReference>
<dbReference type="GO" id="GO:0043065">
    <property type="term" value="P:positive regulation of apoptotic process"/>
    <property type="evidence" value="ECO:0000315"/>
    <property type="project" value="UniProtKB"/>
</dbReference>
<dbReference type="CDD" id="cd13221">
    <property type="entry name" value="PH-GRAM_GRAMDC4"/>
    <property type="match status" value="1"/>
</dbReference>
<dbReference type="FunFam" id="2.30.29.30:FF:000225">
    <property type="entry name" value="GRAM domain containing 4"/>
    <property type="match status" value="1"/>
</dbReference>
<dbReference type="Gene3D" id="2.30.29.30">
    <property type="entry name" value="Pleckstrin-homology domain (PH domain)/Phosphotyrosine-binding domain (PTB)"/>
    <property type="match status" value="1"/>
</dbReference>
<dbReference type="InterPro" id="IPR004182">
    <property type="entry name" value="GRAM"/>
</dbReference>
<dbReference type="InterPro" id="IPR037847">
    <property type="entry name" value="GRAMDC4"/>
</dbReference>
<dbReference type="InterPro" id="IPR037845">
    <property type="entry name" value="GRAMDC4_PH-GRAM"/>
</dbReference>
<dbReference type="InterPro" id="IPR011993">
    <property type="entry name" value="PH-like_dom_sf"/>
</dbReference>
<dbReference type="PANTHER" id="PTHR37402">
    <property type="entry name" value="GRAM DOMAIN-CONTAINING PROTEIN 4"/>
    <property type="match status" value="1"/>
</dbReference>
<dbReference type="PANTHER" id="PTHR37402:SF1">
    <property type="entry name" value="GRAM DOMAIN-CONTAINING PROTEIN 4"/>
    <property type="match status" value="1"/>
</dbReference>
<dbReference type="Pfam" id="PF02893">
    <property type="entry name" value="GRAM"/>
    <property type="match status" value="1"/>
</dbReference>
<dbReference type="SMART" id="SM00568">
    <property type="entry name" value="GRAM"/>
    <property type="match status" value="1"/>
</dbReference>
<accession>Q6IC98</accession>
<accession>A9IN51</accession>
<accession>A9IN57</accession>
<accession>Q68EN0</accession>
<accession>Q9UGE6</accession>
<accession>Q9Y4B9</accession>
<comment type="function">
    <text evidence="1 5">Plays a role as a mediator of E2F1-induced apoptosis in the absence of p53/TP53 (PubMed:15565177). Plays a role as a mediator of E2F1-induced apoptosis in the absence of p53/TP53. Inhibits TLR9 response to nucelic acids and regulates TLR9-mediated innate immune response (By similarity).</text>
</comment>
<comment type="subunit">
    <text evidence="1">Interacts with RTN4 (isoform B).</text>
</comment>
<comment type="interaction">
    <interactant intactId="EBI-10962409">
        <id>Q6IC98</id>
    </interactant>
    <interactant intactId="EBI-739879">
        <id>Q53TS8</id>
        <label>C2CD6</label>
    </interactant>
    <organismsDiffer>false</organismsDiffer>
    <experiments>3</experiments>
</comment>
<comment type="interaction">
    <interactant intactId="EBI-10962409">
        <id>Q6IC98</id>
    </interactant>
    <interactant intactId="EBI-10749669">
        <id>Q8IYE0</id>
        <label>CCDC146</label>
    </interactant>
    <organismsDiffer>false</organismsDiffer>
    <experiments>3</experiments>
</comment>
<comment type="interaction">
    <interactant intactId="EBI-10962409">
        <id>Q6IC98</id>
    </interactant>
    <interactant intactId="EBI-742102">
        <id>Q8IYI6</id>
        <label>EXOC8</label>
    </interactant>
    <organismsDiffer>false</organismsDiffer>
    <experiments>3</experiments>
</comment>
<comment type="interaction">
    <interactant intactId="EBI-10962409">
        <id>Q6IC98</id>
    </interactant>
    <interactant intactId="EBI-10175124">
        <id>Q8IZU0</id>
        <label>FAM9B</label>
    </interactant>
    <organismsDiffer>false</organismsDiffer>
    <experiments>3</experiments>
</comment>
<comment type="interaction">
    <interactant intactId="EBI-10962409">
        <id>Q6IC98</id>
    </interactant>
    <interactant intactId="EBI-448202">
        <id>O95257</id>
        <label>GADD45G</label>
    </interactant>
    <organismsDiffer>false</organismsDiffer>
    <experiments>3</experiments>
</comment>
<comment type="interaction">
    <interactant intactId="EBI-10962409">
        <id>Q6IC98</id>
    </interactant>
    <interactant intactId="EBI-744593">
        <id>Q96QG7</id>
        <label>MTMR9</label>
    </interactant>
    <organismsDiffer>false</organismsDiffer>
    <experiments>3</experiments>
</comment>
<comment type="interaction">
    <interactant intactId="EBI-10962409">
        <id>Q6IC98</id>
    </interactant>
    <interactant intactId="EBI-741158">
        <id>Q96HA8</id>
        <label>NTAQ1</label>
    </interactant>
    <organismsDiffer>false</organismsDiffer>
    <experiments>3</experiments>
</comment>
<comment type="interaction">
    <interactant intactId="EBI-10962409">
        <id>Q6IC98</id>
    </interactant>
    <interactant intactId="EBI-742388">
        <id>Q9H8W4</id>
        <label>PLEKHF2</label>
    </interactant>
    <organismsDiffer>false</organismsDiffer>
    <experiments>3</experiments>
</comment>
<comment type="interaction">
    <interactant intactId="EBI-10962409">
        <id>Q6IC98</id>
    </interactant>
    <interactant intactId="EBI-747035">
        <id>Q9H788</id>
        <label>SH2D4A</label>
    </interactant>
    <organismsDiffer>false</organismsDiffer>
    <experiments>3</experiments>
</comment>
<comment type="interaction">
    <interactant intactId="EBI-10962409">
        <id>Q6IC98</id>
    </interactant>
    <interactant intactId="EBI-358489">
        <id>Q96GM5</id>
        <label>SMARCD1</label>
    </interactant>
    <organismsDiffer>false</organismsDiffer>
    <experiments>3</experiments>
</comment>
<comment type="interaction">
    <interactant intactId="EBI-10962409">
        <id>Q6IC98</id>
    </interactant>
    <interactant intactId="EBI-14211313">
        <id>B2RWP4</id>
        <label>TACC2</label>
    </interactant>
    <organismsDiffer>false</organismsDiffer>
    <experiments>3</experiments>
</comment>
<comment type="subcellular location">
    <subcellularLocation>
        <location evidence="9">Mitochondrion membrane</location>
        <topology evidence="9">Multi-pass membrane protein</topology>
    </subcellularLocation>
    <subcellularLocation>
        <location evidence="1">Endoplasmic reticulum membrane</location>
        <topology evidence="2">Multi-pass membrane protein</topology>
    </subcellularLocation>
    <text evidence="5">Colocalizes with COX4I1.</text>
</comment>
<comment type="alternative products">
    <event type="alternative splicing"/>
    <isoform>
        <id>Q6IC98-1</id>
        <name>1</name>
        <sequence type="displayed"/>
    </isoform>
    <isoform>
        <id>Q6IC98-2</id>
        <name>2</name>
        <sequence type="described" ref="VSP_032771"/>
    </isoform>
</comment>
<comment type="tissue specificity">
    <text evidence="7">Expressed in lung and in primary lung squamous cell carcinoma (LSCC).</text>
</comment>
<comment type="induction">
    <text evidence="4 5">Up-regulated in the mitochondria by E2F1 after addition of 4-hydroxytamoxifen (at protein level).</text>
</comment>
<comment type="sequence caution" evidence="9">
    <conflict type="erroneous initiation">
        <sequence resource="EMBL-CDS" id="BAA34487"/>
    </conflict>
    <text>Extended N-terminus.</text>
</comment>